<evidence type="ECO:0000255" key="1">
    <source>
        <dbReference type="HAMAP-Rule" id="MF_00145"/>
    </source>
</evidence>
<proteinExistence type="inferred from homology"/>
<keyword id="KW-0067">ATP-binding</keyword>
<keyword id="KW-0963">Cytoplasm</keyword>
<keyword id="KW-0324">Glycolysis</keyword>
<keyword id="KW-0418">Kinase</keyword>
<keyword id="KW-0547">Nucleotide-binding</keyword>
<keyword id="KW-0597">Phosphoprotein</keyword>
<keyword id="KW-0808">Transferase</keyword>
<name>PGK_BACAC</name>
<feature type="chain" id="PRO_1000192795" description="Phosphoglycerate kinase">
    <location>
        <begin position="1"/>
        <end position="394"/>
    </location>
</feature>
<feature type="binding site" evidence="1">
    <location>
        <begin position="21"/>
        <end position="23"/>
    </location>
    <ligand>
        <name>substrate</name>
    </ligand>
</feature>
<feature type="binding site" evidence="1">
    <location>
        <position position="36"/>
    </location>
    <ligand>
        <name>substrate</name>
    </ligand>
</feature>
<feature type="binding site" evidence="1">
    <location>
        <begin position="59"/>
        <end position="62"/>
    </location>
    <ligand>
        <name>substrate</name>
    </ligand>
</feature>
<feature type="binding site" evidence="1">
    <location>
        <position position="118"/>
    </location>
    <ligand>
        <name>substrate</name>
    </ligand>
</feature>
<feature type="binding site" evidence="1">
    <location>
        <position position="151"/>
    </location>
    <ligand>
        <name>substrate</name>
    </ligand>
</feature>
<feature type="binding site" evidence="1">
    <location>
        <position position="201"/>
    </location>
    <ligand>
        <name>ATP</name>
        <dbReference type="ChEBI" id="CHEBI:30616"/>
    </ligand>
</feature>
<feature type="binding site" evidence="1">
    <location>
        <position position="292"/>
    </location>
    <ligand>
        <name>ATP</name>
        <dbReference type="ChEBI" id="CHEBI:30616"/>
    </ligand>
</feature>
<feature type="binding site" evidence="1">
    <location>
        <position position="323"/>
    </location>
    <ligand>
        <name>ATP</name>
        <dbReference type="ChEBI" id="CHEBI:30616"/>
    </ligand>
</feature>
<feature type="binding site" evidence="1">
    <location>
        <begin position="350"/>
        <end position="353"/>
    </location>
    <ligand>
        <name>ATP</name>
        <dbReference type="ChEBI" id="CHEBI:30616"/>
    </ligand>
</feature>
<feature type="modified residue" description="Phosphoserine" evidence="1">
    <location>
        <position position="183"/>
    </location>
</feature>
<feature type="modified residue" description="Phosphothreonine" evidence="1">
    <location>
        <position position="299"/>
    </location>
</feature>
<accession>C3LDI3</accession>
<comment type="catalytic activity">
    <reaction evidence="1">
        <text>(2R)-3-phosphoglycerate + ATP = (2R)-3-phospho-glyceroyl phosphate + ADP</text>
        <dbReference type="Rhea" id="RHEA:14801"/>
        <dbReference type="ChEBI" id="CHEBI:30616"/>
        <dbReference type="ChEBI" id="CHEBI:57604"/>
        <dbReference type="ChEBI" id="CHEBI:58272"/>
        <dbReference type="ChEBI" id="CHEBI:456216"/>
        <dbReference type="EC" id="2.7.2.3"/>
    </reaction>
</comment>
<comment type="pathway">
    <text evidence="1">Carbohydrate degradation; glycolysis; pyruvate from D-glyceraldehyde 3-phosphate: step 2/5.</text>
</comment>
<comment type="subunit">
    <text evidence="1">Monomer.</text>
</comment>
<comment type="subcellular location">
    <subcellularLocation>
        <location evidence="1">Cytoplasm</location>
    </subcellularLocation>
</comment>
<comment type="similarity">
    <text evidence="1">Belongs to the phosphoglycerate kinase family.</text>
</comment>
<reference key="1">
    <citation type="submission" date="2008-10" db="EMBL/GenBank/DDBJ databases">
        <title>Genome sequence of Bacillus anthracis str. CDC 684.</title>
        <authorList>
            <person name="Dodson R.J."/>
            <person name="Munk A.C."/>
            <person name="Brettin T."/>
            <person name="Bruce D."/>
            <person name="Detter C."/>
            <person name="Tapia R."/>
            <person name="Han C."/>
            <person name="Sutton G."/>
            <person name="Sims D."/>
        </authorList>
    </citation>
    <scope>NUCLEOTIDE SEQUENCE [LARGE SCALE GENOMIC DNA]</scope>
    <source>
        <strain>CDC 684 / NRRL 3495</strain>
    </source>
</reference>
<sequence length="394" mass="42298">MNKKSIRDVDLKGKRVFCRVDFNVPMKEGKITDETRIRAALPTIQYLVEQGAKVILASHLGRPKGQAVEELRLTPVAARLGELLGKDVKKADEAFGPVAQEMVAAMNEGDVLVLENVRFYAGEEKNDAELAKEFAALADIFVNDAFGAAHRAHASTAGIADYLPAVSGLLMEKELEVLGKALSNPERPFTAIIGGAKVKDKIGLIRHLLDKVDNLIIGGGLAYTFVKALGHEIGLSLCEDDKIELAKEFMQLAKEKGVNFYMPVDVVITEEFSETATTKIVGIDSIPSNWEGVDIGPKTREIYADVIKNSKLVVWNGPMGVFEMTPFAEGTKAVGQALADAEGTYSVIGGGDSAAAVEKFGMADKMSHISTGGGASLEFMEGKELPGVVCLNDK</sequence>
<dbReference type="EC" id="2.7.2.3" evidence="1"/>
<dbReference type="EMBL" id="CP001215">
    <property type="protein sequence ID" value="ACP13013.1"/>
    <property type="molecule type" value="Genomic_DNA"/>
</dbReference>
<dbReference type="RefSeq" id="WP_001036337.1">
    <property type="nucleotide sequence ID" value="NC_012581.1"/>
</dbReference>
<dbReference type="SMR" id="C3LDI3"/>
<dbReference type="KEGG" id="bah:BAMEG_5420"/>
<dbReference type="HOGENOM" id="CLU_025427_0_2_9"/>
<dbReference type="UniPathway" id="UPA00109">
    <property type="reaction ID" value="UER00185"/>
</dbReference>
<dbReference type="GO" id="GO:0005829">
    <property type="term" value="C:cytosol"/>
    <property type="evidence" value="ECO:0007669"/>
    <property type="project" value="TreeGrafter"/>
</dbReference>
<dbReference type="GO" id="GO:0043531">
    <property type="term" value="F:ADP binding"/>
    <property type="evidence" value="ECO:0007669"/>
    <property type="project" value="TreeGrafter"/>
</dbReference>
<dbReference type="GO" id="GO:0005524">
    <property type="term" value="F:ATP binding"/>
    <property type="evidence" value="ECO:0007669"/>
    <property type="project" value="UniProtKB-KW"/>
</dbReference>
<dbReference type="GO" id="GO:0004618">
    <property type="term" value="F:phosphoglycerate kinase activity"/>
    <property type="evidence" value="ECO:0007669"/>
    <property type="project" value="UniProtKB-UniRule"/>
</dbReference>
<dbReference type="GO" id="GO:0006094">
    <property type="term" value="P:gluconeogenesis"/>
    <property type="evidence" value="ECO:0007669"/>
    <property type="project" value="TreeGrafter"/>
</dbReference>
<dbReference type="GO" id="GO:0006096">
    <property type="term" value="P:glycolytic process"/>
    <property type="evidence" value="ECO:0007669"/>
    <property type="project" value="UniProtKB-UniRule"/>
</dbReference>
<dbReference type="CDD" id="cd00318">
    <property type="entry name" value="Phosphoglycerate_kinase"/>
    <property type="match status" value="1"/>
</dbReference>
<dbReference type="FunFam" id="3.40.50.1260:FF:000001">
    <property type="entry name" value="Phosphoglycerate kinase"/>
    <property type="match status" value="1"/>
</dbReference>
<dbReference type="FunFam" id="3.40.50.1260:FF:000002">
    <property type="entry name" value="Phosphoglycerate kinase"/>
    <property type="match status" value="1"/>
</dbReference>
<dbReference type="Gene3D" id="3.40.50.1260">
    <property type="entry name" value="Phosphoglycerate kinase, N-terminal domain"/>
    <property type="match status" value="2"/>
</dbReference>
<dbReference type="HAMAP" id="MF_00145">
    <property type="entry name" value="Phosphoglyc_kinase"/>
    <property type="match status" value="1"/>
</dbReference>
<dbReference type="InterPro" id="IPR001576">
    <property type="entry name" value="Phosphoglycerate_kinase"/>
</dbReference>
<dbReference type="InterPro" id="IPR015911">
    <property type="entry name" value="Phosphoglycerate_kinase_CS"/>
</dbReference>
<dbReference type="InterPro" id="IPR015824">
    <property type="entry name" value="Phosphoglycerate_kinase_N"/>
</dbReference>
<dbReference type="InterPro" id="IPR036043">
    <property type="entry name" value="Phosphoglycerate_kinase_sf"/>
</dbReference>
<dbReference type="PANTHER" id="PTHR11406">
    <property type="entry name" value="PHOSPHOGLYCERATE KINASE"/>
    <property type="match status" value="1"/>
</dbReference>
<dbReference type="PANTHER" id="PTHR11406:SF23">
    <property type="entry name" value="PHOSPHOGLYCERATE KINASE 1, CHLOROPLASTIC-RELATED"/>
    <property type="match status" value="1"/>
</dbReference>
<dbReference type="Pfam" id="PF00162">
    <property type="entry name" value="PGK"/>
    <property type="match status" value="1"/>
</dbReference>
<dbReference type="PIRSF" id="PIRSF000724">
    <property type="entry name" value="Pgk"/>
    <property type="match status" value="1"/>
</dbReference>
<dbReference type="PRINTS" id="PR00477">
    <property type="entry name" value="PHGLYCKINASE"/>
</dbReference>
<dbReference type="SUPFAM" id="SSF53748">
    <property type="entry name" value="Phosphoglycerate kinase"/>
    <property type="match status" value="1"/>
</dbReference>
<dbReference type="PROSITE" id="PS00111">
    <property type="entry name" value="PGLYCERATE_KINASE"/>
    <property type="match status" value="1"/>
</dbReference>
<gene>
    <name evidence="1" type="primary">pgk</name>
    <name type="ordered locus">BAMEG_5420</name>
</gene>
<protein>
    <recommendedName>
        <fullName evidence="1">Phosphoglycerate kinase</fullName>
        <ecNumber evidence="1">2.7.2.3</ecNumber>
    </recommendedName>
</protein>
<organism>
    <name type="scientific">Bacillus anthracis (strain CDC 684 / NRRL 3495)</name>
    <dbReference type="NCBI Taxonomy" id="568206"/>
    <lineage>
        <taxon>Bacteria</taxon>
        <taxon>Bacillati</taxon>
        <taxon>Bacillota</taxon>
        <taxon>Bacilli</taxon>
        <taxon>Bacillales</taxon>
        <taxon>Bacillaceae</taxon>
        <taxon>Bacillus</taxon>
        <taxon>Bacillus cereus group</taxon>
    </lineage>
</organism>